<comment type="function">
    <text evidence="2">Component of the ubiquinol-cytochrome c reductase complex (complex III or cytochrome b-c1 complex) that is part of the mitochondrial respiratory chain. The b-c1 complex mediates electron transfer from ubiquinol to cytochrome c. Contributes to the generation of a proton gradient across the mitochondrial membrane that is then used for ATP synthesis.</text>
</comment>
<comment type="cofactor">
    <cofactor evidence="2">
        <name>heme b</name>
        <dbReference type="ChEBI" id="CHEBI:60344"/>
    </cofactor>
    <text evidence="2">Binds 2 heme b groups non-covalently.</text>
</comment>
<comment type="subunit">
    <text evidence="2">The cytochrome bc1 complex contains 11 subunits: 3 respiratory subunits (MT-CYB, CYC1 and UQCRFS1), 2 core proteins (UQCRC1 and UQCRC2) and 6 low-molecular weight proteins (UQCRH/QCR6, UQCRB/QCR7, UQCRQ/QCR8, UQCR10/QCR9, UQCR11/QCR10 and a cleavage product of UQCRFS1). This cytochrome bc1 complex then forms a dimer.</text>
</comment>
<comment type="subcellular location">
    <subcellularLocation>
        <location evidence="2">Mitochondrion inner membrane</location>
        <topology evidence="2">Multi-pass membrane protein</topology>
    </subcellularLocation>
</comment>
<comment type="miscellaneous">
    <text evidence="1">Heme 1 (or BL or b562) is low-potential and absorbs at about 562 nm, and heme 2 (or BH or b566) is high-potential and absorbs at about 566 nm.</text>
</comment>
<comment type="similarity">
    <text evidence="3 4">Belongs to the cytochrome b family.</text>
</comment>
<comment type="caution">
    <text evidence="2">The full-length protein contains only eight transmembrane helices, not nine as predicted by bioinformatics tools.</text>
</comment>
<protein>
    <recommendedName>
        <fullName>Cytochrome b</fullName>
    </recommendedName>
    <alternativeName>
        <fullName>Complex III subunit 3</fullName>
    </alternativeName>
    <alternativeName>
        <fullName>Complex III subunit III</fullName>
    </alternativeName>
    <alternativeName>
        <fullName>Cytochrome b-c1 complex subunit 3</fullName>
    </alternativeName>
    <alternativeName>
        <fullName>Ubiquinol-cytochrome-c reductase complex cytochrome b subunit</fullName>
    </alternativeName>
</protein>
<name>CYB_DELCA</name>
<keyword id="KW-0249">Electron transport</keyword>
<keyword id="KW-0349">Heme</keyword>
<keyword id="KW-0408">Iron</keyword>
<keyword id="KW-0472">Membrane</keyword>
<keyword id="KW-0479">Metal-binding</keyword>
<keyword id="KW-0496">Mitochondrion</keyword>
<keyword id="KW-0999">Mitochondrion inner membrane</keyword>
<keyword id="KW-0679">Respiratory chain</keyword>
<keyword id="KW-0812">Transmembrane</keyword>
<keyword id="KW-1133">Transmembrane helix</keyword>
<keyword id="KW-0813">Transport</keyword>
<keyword id="KW-0830">Ubiquinone</keyword>
<gene>
    <name type="primary">MT-CYB</name>
    <name type="synonym">COB</name>
    <name type="synonym">CYTB</name>
    <name type="synonym">MTCYB</name>
</gene>
<sequence length="379" mass="42756">MTNIRKTHPLMKILNDTFIDLPTPSNISSWWNFGSLLALCLIMQILTGLFLAMHYTPDTSTAFSSVAHICRDVNYGWFIRYLHANGASMFFICLYAHIGRGLYYGSYMFQETWNIGVLLLLTVMATAFVGYVLPWGQMSFWGATVITNLLSAIPYIGTTLVEWIWGGFSVDKATLTRFFAFHFILPFIITALAAVHLLFLHETGSNNPTGIPSNMDMIPFHPYYTIKDILGALLLILTLLALTLFTPDLLGDPDNYTPANPLSTPAHIKPEWYFLFAYAILRSIPNKLGGVLALLLSILILIFIPMLQTSKQRSMMFRPFSQLLFWTLIADLLTLTWIGGQPVEHPYIIVGQLASILYFLLILVLMPTAGLIENKLLKW</sequence>
<geneLocation type="mitochondrion"/>
<organism>
    <name type="scientific">Delphinus capensis</name>
    <name type="common">Long-beaked common dolphin</name>
    <dbReference type="NCBI Taxonomy" id="103584"/>
    <lineage>
        <taxon>Eukaryota</taxon>
        <taxon>Metazoa</taxon>
        <taxon>Chordata</taxon>
        <taxon>Craniata</taxon>
        <taxon>Vertebrata</taxon>
        <taxon>Euteleostomi</taxon>
        <taxon>Mammalia</taxon>
        <taxon>Eutheria</taxon>
        <taxon>Laurasiatheria</taxon>
        <taxon>Artiodactyla</taxon>
        <taxon>Whippomorpha</taxon>
        <taxon>Cetacea</taxon>
        <taxon>Odontoceti</taxon>
        <taxon>Delphinidae</taxon>
        <taxon>Delphinus</taxon>
    </lineage>
</organism>
<feature type="chain" id="PRO_0000060874" description="Cytochrome b">
    <location>
        <begin position="1"/>
        <end position="379"/>
    </location>
</feature>
<feature type="transmembrane region" description="Helical" evidence="2">
    <location>
        <begin position="33"/>
        <end position="53"/>
    </location>
</feature>
<feature type="transmembrane region" description="Helical" evidence="2">
    <location>
        <begin position="77"/>
        <end position="98"/>
    </location>
</feature>
<feature type="transmembrane region" description="Helical" evidence="2">
    <location>
        <begin position="113"/>
        <end position="133"/>
    </location>
</feature>
<feature type="transmembrane region" description="Helical" evidence="2">
    <location>
        <begin position="178"/>
        <end position="198"/>
    </location>
</feature>
<feature type="transmembrane region" description="Helical" evidence="2">
    <location>
        <begin position="226"/>
        <end position="246"/>
    </location>
</feature>
<feature type="transmembrane region" description="Helical" evidence="2">
    <location>
        <begin position="288"/>
        <end position="308"/>
    </location>
</feature>
<feature type="transmembrane region" description="Helical" evidence="2">
    <location>
        <begin position="320"/>
        <end position="340"/>
    </location>
</feature>
<feature type="transmembrane region" description="Helical" evidence="2">
    <location>
        <begin position="347"/>
        <end position="367"/>
    </location>
</feature>
<feature type="binding site" description="axial binding residue" evidence="2">
    <location>
        <position position="83"/>
    </location>
    <ligand>
        <name>heme b</name>
        <dbReference type="ChEBI" id="CHEBI:60344"/>
        <label>b562</label>
    </ligand>
    <ligandPart>
        <name>Fe</name>
        <dbReference type="ChEBI" id="CHEBI:18248"/>
    </ligandPart>
</feature>
<feature type="binding site" description="axial binding residue" evidence="2">
    <location>
        <position position="97"/>
    </location>
    <ligand>
        <name>heme b</name>
        <dbReference type="ChEBI" id="CHEBI:60344"/>
        <label>b566</label>
    </ligand>
    <ligandPart>
        <name>Fe</name>
        <dbReference type="ChEBI" id="CHEBI:18248"/>
    </ligandPart>
</feature>
<feature type="binding site" description="axial binding residue" evidence="2">
    <location>
        <position position="182"/>
    </location>
    <ligand>
        <name>heme b</name>
        <dbReference type="ChEBI" id="CHEBI:60344"/>
        <label>b562</label>
    </ligand>
    <ligandPart>
        <name>Fe</name>
        <dbReference type="ChEBI" id="CHEBI:18248"/>
    </ligandPart>
</feature>
<feature type="binding site" description="axial binding residue" evidence="2">
    <location>
        <position position="196"/>
    </location>
    <ligand>
        <name>heme b</name>
        <dbReference type="ChEBI" id="CHEBI:60344"/>
        <label>b566</label>
    </ligand>
    <ligandPart>
        <name>Fe</name>
        <dbReference type="ChEBI" id="CHEBI:18248"/>
    </ligandPart>
</feature>
<feature type="binding site" evidence="2">
    <location>
        <position position="201"/>
    </location>
    <ligand>
        <name>a ubiquinone</name>
        <dbReference type="ChEBI" id="CHEBI:16389"/>
    </ligand>
</feature>
<feature type="sequence variant">
    <original>A</original>
    <variation>S</variation>
    <location>
        <position position="38"/>
    </location>
</feature>
<proteinExistence type="inferred from homology"/>
<reference key="1">
    <citation type="journal article" date="1999" name="Mar. Mamm. Sci.">
        <title>Phylogenetic relationships among the delphinid cetaceans based on full cytochrome b sequences.</title>
        <authorList>
            <person name="LeDuc R.G."/>
            <person name="Perrin W.F."/>
            <person name="Dizon A.E."/>
        </authorList>
    </citation>
    <scope>NUCLEOTIDE SEQUENCE [GENOMIC DNA]</scope>
</reference>
<evidence type="ECO:0000250" key="1"/>
<evidence type="ECO:0000250" key="2">
    <source>
        <dbReference type="UniProtKB" id="P00157"/>
    </source>
</evidence>
<evidence type="ECO:0000255" key="3">
    <source>
        <dbReference type="PROSITE-ProRule" id="PRU00967"/>
    </source>
</evidence>
<evidence type="ECO:0000255" key="4">
    <source>
        <dbReference type="PROSITE-ProRule" id="PRU00968"/>
    </source>
</evidence>
<accession>Q9TDK4</accession>
<accession>Q9TDK3</accession>
<dbReference type="EMBL" id="AF084086">
    <property type="protein sequence ID" value="AAD54463.1"/>
    <property type="molecule type" value="Genomic_DNA"/>
</dbReference>
<dbReference type="EMBL" id="AF084087">
    <property type="protein sequence ID" value="AAD54464.1"/>
    <property type="molecule type" value="Genomic_DNA"/>
</dbReference>
<dbReference type="SMR" id="Q9TDK4"/>
<dbReference type="GO" id="GO:0005743">
    <property type="term" value="C:mitochondrial inner membrane"/>
    <property type="evidence" value="ECO:0007669"/>
    <property type="project" value="UniProtKB-SubCell"/>
</dbReference>
<dbReference type="GO" id="GO:0045275">
    <property type="term" value="C:respiratory chain complex III"/>
    <property type="evidence" value="ECO:0007669"/>
    <property type="project" value="InterPro"/>
</dbReference>
<dbReference type="GO" id="GO:0046872">
    <property type="term" value="F:metal ion binding"/>
    <property type="evidence" value="ECO:0007669"/>
    <property type="project" value="UniProtKB-KW"/>
</dbReference>
<dbReference type="GO" id="GO:0008121">
    <property type="term" value="F:ubiquinol-cytochrome-c reductase activity"/>
    <property type="evidence" value="ECO:0007669"/>
    <property type="project" value="InterPro"/>
</dbReference>
<dbReference type="GO" id="GO:0006122">
    <property type="term" value="P:mitochondrial electron transport, ubiquinol to cytochrome c"/>
    <property type="evidence" value="ECO:0007669"/>
    <property type="project" value="TreeGrafter"/>
</dbReference>
<dbReference type="CDD" id="cd00290">
    <property type="entry name" value="cytochrome_b_C"/>
    <property type="match status" value="1"/>
</dbReference>
<dbReference type="CDD" id="cd00284">
    <property type="entry name" value="Cytochrome_b_N"/>
    <property type="match status" value="1"/>
</dbReference>
<dbReference type="FunFam" id="1.20.810.10:FF:000002">
    <property type="entry name" value="Cytochrome b"/>
    <property type="match status" value="1"/>
</dbReference>
<dbReference type="Gene3D" id="1.20.810.10">
    <property type="entry name" value="Cytochrome Bc1 Complex, Chain C"/>
    <property type="match status" value="1"/>
</dbReference>
<dbReference type="InterPro" id="IPR005798">
    <property type="entry name" value="Cyt_b/b6_C"/>
</dbReference>
<dbReference type="InterPro" id="IPR036150">
    <property type="entry name" value="Cyt_b/b6_C_sf"/>
</dbReference>
<dbReference type="InterPro" id="IPR005797">
    <property type="entry name" value="Cyt_b/b6_N"/>
</dbReference>
<dbReference type="InterPro" id="IPR027387">
    <property type="entry name" value="Cytb/b6-like_sf"/>
</dbReference>
<dbReference type="InterPro" id="IPR030689">
    <property type="entry name" value="Cytochrome_b"/>
</dbReference>
<dbReference type="InterPro" id="IPR048260">
    <property type="entry name" value="Cytochrome_b_C_euk/bac"/>
</dbReference>
<dbReference type="InterPro" id="IPR048259">
    <property type="entry name" value="Cytochrome_b_N_euk/bac"/>
</dbReference>
<dbReference type="InterPro" id="IPR016174">
    <property type="entry name" value="Di-haem_cyt_TM"/>
</dbReference>
<dbReference type="PANTHER" id="PTHR19271">
    <property type="entry name" value="CYTOCHROME B"/>
    <property type="match status" value="1"/>
</dbReference>
<dbReference type="PANTHER" id="PTHR19271:SF16">
    <property type="entry name" value="CYTOCHROME B"/>
    <property type="match status" value="1"/>
</dbReference>
<dbReference type="Pfam" id="PF00032">
    <property type="entry name" value="Cytochrom_B_C"/>
    <property type="match status" value="1"/>
</dbReference>
<dbReference type="Pfam" id="PF00033">
    <property type="entry name" value="Cytochrome_B"/>
    <property type="match status" value="1"/>
</dbReference>
<dbReference type="PIRSF" id="PIRSF038885">
    <property type="entry name" value="COB"/>
    <property type="match status" value="1"/>
</dbReference>
<dbReference type="SUPFAM" id="SSF81648">
    <property type="entry name" value="a domain/subunit of cytochrome bc1 complex (Ubiquinol-cytochrome c reductase)"/>
    <property type="match status" value="1"/>
</dbReference>
<dbReference type="SUPFAM" id="SSF81342">
    <property type="entry name" value="Transmembrane di-heme cytochromes"/>
    <property type="match status" value="1"/>
</dbReference>
<dbReference type="PROSITE" id="PS51003">
    <property type="entry name" value="CYTB_CTER"/>
    <property type="match status" value="1"/>
</dbReference>
<dbReference type="PROSITE" id="PS51002">
    <property type="entry name" value="CYTB_NTER"/>
    <property type="match status" value="1"/>
</dbReference>